<sequence length="444" mass="48288">MSYKMFGRCRTACFRSPNLFAANKGMPLQASVAGGASRYIIGTASVLVGAMAGFYIMNSRSAIHEYVSCPLVRLVTPDAEDGHKLGIWFLKYGLAPKLMFDKDDPVLKVEVFGKTMSNPIGCAAGLDKDGEAIDGIAQSGFGYVEIGTVTPLAQPGNPKPRFFRLPMDEAVINRYGFNSSGHKKVYDNVLSRVRQFLGAYFRDDTVNSLALYKDKLLGINLGKNKNGDEVEDYLRGVEKFQSLADVLVINVSSPNTPGLRDLQQEGRLTELLSMIVAKRNSLINEGNVLGASTHKPPVLVKIAPDLTEPELQSIAEAAKKSSIDGIIVSNTTIQRPDSLYTVDEELKNQAGGLSGKPVKPFALKALRTIHQYTKDTNLVLVGCGGISSGQDAIEFAKAGAHFVQLYTAYAYRGPGLIARIKDEVTEELRNEGKTWMEIIGQDAK</sequence>
<protein>
    <recommendedName>
        <fullName>Dihydroorotate dehydrogenase (quinone), mitochondrial</fullName>
        <shortName>DHOD</shortName>
        <shortName>DHODase</shortName>
        <shortName>DHOdehase</shortName>
        <ecNumber>1.3.5.2</ecNumber>
    </recommendedName>
    <alternativeName>
        <fullName>Dihydroorotate oxidase</fullName>
    </alternativeName>
</protein>
<accession>Q75CE1</accession>
<reference key="1">
    <citation type="journal article" date="2004" name="Science">
        <title>The Ashbya gossypii genome as a tool for mapping the ancient Saccharomyces cerevisiae genome.</title>
        <authorList>
            <person name="Dietrich F.S."/>
            <person name="Voegeli S."/>
            <person name="Brachat S."/>
            <person name="Lerch A."/>
            <person name="Gates K."/>
            <person name="Steiner S."/>
            <person name="Mohr C."/>
            <person name="Poehlmann R."/>
            <person name="Luedi P."/>
            <person name="Choi S."/>
            <person name="Wing R.A."/>
            <person name="Flavier A."/>
            <person name="Gaffney T.D."/>
            <person name="Philippsen P."/>
        </authorList>
    </citation>
    <scope>NUCLEOTIDE SEQUENCE [LARGE SCALE GENOMIC DNA]</scope>
    <source>
        <strain>ATCC 10895 / CBS 109.51 / FGSC 9923 / NRRL Y-1056</strain>
    </source>
</reference>
<reference key="2">
    <citation type="journal article" date="2013" name="G3 (Bethesda)">
        <title>Genomes of Ashbya fungi isolated from insects reveal four mating-type loci, numerous translocations, lack of transposons, and distinct gene duplications.</title>
        <authorList>
            <person name="Dietrich F.S."/>
            <person name="Voegeli S."/>
            <person name="Kuo S."/>
            <person name="Philippsen P."/>
        </authorList>
    </citation>
    <scope>GENOME REANNOTATION</scope>
    <source>
        <strain>ATCC 10895 / CBS 109.51 / FGSC 9923 / NRRL Y-1056</strain>
    </source>
</reference>
<evidence type="ECO:0000250" key="1"/>
<evidence type="ECO:0000255" key="2"/>
<evidence type="ECO:0000305" key="3"/>
<name>PYRD_EREGS</name>
<keyword id="KW-0285">Flavoprotein</keyword>
<keyword id="KW-0288">FMN</keyword>
<keyword id="KW-0472">Membrane</keyword>
<keyword id="KW-0496">Mitochondrion</keyword>
<keyword id="KW-0999">Mitochondrion inner membrane</keyword>
<keyword id="KW-0560">Oxidoreductase</keyword>
<keyword id="KW-0665">Pyrimidine biosynthesis</keyword>
<keyword id="KW-1185">Reference proteome</keyword>
<keyword id="KW-0809">Transit peptide</keyword>
<keyword id="KW-0812">Transmembrane</keyword>
<keyword id="KW-1133">Transmembrane helix</keyword>
<gene>
    <name type="primary">URA9</name>
    <name type="ordered locus">ACL035C</name>
</gene>
<comment type="function">
    <text evidence="1">Catalyzes the conversion of dihydroorotate to orotate with quinone as electron acceptor.</text>
</comment>
<comment type="catalytic activity">
    <reaction>
        <text>(S)-dihydroorotate + a quinone = orotate + a quinol</text>
        <dbReference type="Rhea" id="RHEA:30187"/>
        <dbReference type="ChEBI" id="CHEBI:24646"/>
        <dbReference type="ChEBI" id="CHEBI:30839"/>
        <dbReference type="ChEBI" id="CHEBI:30864"/>
        <dbReference type="ChEBI" id="CHEBI:132124"/>
        <dbReference type="EC" id="1.3.5.2"/>
    </reaction>
</comment>
<comment type="cofactor">
    <cofactor evidence="1">
        <name>FMN</name>
        <dbReference type="ChEBI" id="CHEBI:58210"/>
    </cofactor>
    <text evidence="1">Binds 1 FMN per subunit.</text>
</comment>
<comment type="pathway">
    <text>Pyrimidine metabolism; UMP biosynthesis via de novo pathway; orotate from (S)-dihydroorotate (quinone route): step 1/1.</text>
</comment>
<comment type="subcellular location">
    <subcellularLocation>
        <location evidence="1">Mitochondrion inner membrane</location>
        <topology evidence="3">Single-pass membrane protein</topology>
    </subcellularLocation>
</comment>
<comment type="similarity">
    <text evidence="3">Belongs to the dihydroorotate dehydrogenase family. Type 2 subfamily.</text>
</comment>
<proteinExistence type="inferred from homology"/>
<feature type="transit peptide" description="Mitochondrion" evidence="2">
    <location>
        <begin position="1"/>
        <end status="unknown"/>
    </location>
</feature>
<feature type="chain" id="PRO_0000029890" description="Dihydroorotate dehydrogenase (quinone), mitochondrial">
    <location>
        <begin status="unknown"/>
        <end position="444"/>
    </location>
</feature>
<feature type="transmembrane region" description="Helical" evidence="2">
    <location>
        <begin position="34"/>
        <end position="56"/>
    </location>
</feature>
<feature type="active site" description="Nucleophile" evidence="1">
    <location>
        <position position="253"/>
    </location>
</feature>
<feature type="binding site" evidence="1">
    <location>
        <begin position="124"/>
        <end position="128"/>
    </location>
    <ligand>
        <name>FMN</name>
        <dbReference type="ChEBI" id="CHEBI:58210"/>
    </ligand>
</feature>
<feature type="binding site" evidence="1">
    <location>
        <position position="128"/>
    </location>
    <ligand>
        <name>substrate</name>
    </ligand>
</feature>
<feature type="binding site" evidence="1">
    <location>
        <position position="148"/>
    </location>
    <ligand>
        <name>FMN</name>
        <dbReference type="ChEBI" id="CHEBI:58210"/>
    </ligand>
</feature>
<feature type="binding site" evidence="1">
    <location>
        <begin position="173"/>
        <end position="177"/>
    </location>
    <ligand>
        <name>substrate</name>
    </ligand>
</feature>
<feature type="binding site" evidence="1">
    <location>
        <position position="220"/>
    </location>
    <ligand>
        <name>FMN</name>
        <dbReference type="ChEBI" id="CHEBI:58210"/>
    </ligand>
</feature>
<feature type="binding site" evidence="1">
    <location>
        <begin position="250"/>
        <end position="255"/>
    </location>
    <ligand>
        <name>substrate</name>
    </ligand>
</feature>
<feature type="binding site" evidence="1">
    <location>
        <position position="250"/>
    </location>
    <ligand>
        <name>FMN</name>
        <dbReference type="ChEBI" id="CHEBI:58210"/>
    </ligand>
</feature>
<feature type="binding site" evidence="1">
    <location>
        <position position="301"/>
    </location>
    <ligand>
        <name>FMN</name>
        <dbReference type="ChEBI" id="CHEBI:58210"/>
    </ligand>
</feature>
<feature type="binding site" evidence="1">
    <location>
        <position position="329"/>
    </location>
    <ligand>
        <name>FMN</name>
        <dbReference type="ChEBI" id="CHEBI:58210"/>
    </ligand>
</feature>
<feature type="binding site" evidence="1">
    <location>
        <begin position="330"/>
        <end position="331"/>
    </location>
    <ligand>
        <name>substrate</name>
    </ligand>
</feature>
<feature type="binding site" evidence="1">
    <location>
        <position position="355"/>
    </location>
    <ligand>
        <name>FMN</name>
        <dbReference type="ChEBI" id="CHEBI:58210"/>
    </ligand>
</feature>
<feature type="binding site" evidence="1">
    <location>
        <position position="385"/>
    </location>
    <ligand>
        <name>FMN</name>
        <dbReference type="ChEBI" id="CHEBI:58210"/>
    </ligand>
</feature>
<feature type="binding site" evidence="1">
    <location>
        <begin position="406"/>
        <end position="407"/>
    </location>
    <ligand>
        <name>FMN</name>
        <dbReference type="ChEBI" id="CHEBI:58210"/>
    </ligand>
</feature>
<dbReference type="EC" id="1.3.5.2"/>
<dbReference type="EMBL" id="AE016816">
    <property type="protein sequence ID" value="AAS51193.1"/>
    <property type="molecule type" value="Genomic_DNA"/>
</dbReference>
<dbReference type="RefSeq" id="NP_983369.1">
    <property type="nucleotide sequence ID" value="NM_208722.1"/>
</dbReference>
<dbReference type="SMR" id="Q75CE1"/>
<dbReference type="FunCoup" id="Q75CE1">
    <property type="interactions" value="734"/>
</dbReference>
<dbReference type="STRING" id="284811.Q75CE1"/>
<dbReference type="EnsemblFungi" id="AAS51193">
    <property type="protein sequence ID" value="AAS51193"/>
    <property type="gene ID" value="AGOS_ACL035C"/>
</dbReference>
<dbReference type="GeneID" id="4619494"/>
<dbReference type="KEGG" id="ago:AGOS_ACL035C"/>
<dbReference type="eggNOG" id="KOG1436">
    <property type="taxonomic scope" value="Eukaryota"/>
</dbReference>
<dbReference type="HOGENOM" id="CLU_013640_4_0_1"/>
<dbReference type="InParanoid" id="Q75CE1"/>
<dbReference type="OMA" id="IYGTDTR"/>
<dbReference type="OrthoDB" id="14784at2759"/>
<dbReference type="UniPathway" id="UPA00070">
    <property type="reaction ID" value="UER00946"/>
</dbReference>
<dbReference type="Proteomes" id="UP000000591">
    <property type="component" value="Chromosome III"/>
</dbReference>
<dbReference type="GO" id="GO:0005743">
    <property type="term" value="C:mitochondrial inner membrane"/>
    <property type="evidence" value="ECO:0000318"/>
    <property type="project" value="GO_Central"/>
</dbReference>
<dbReference type="GO" id="GO:0106430">
    <property type="term" value="F:dihydroorotate dehydrogenase (quinone) activity"/>
    <property type="evidence" value="ECO:0007669"/>
    <property type="project" value="UniProtKB-EC"/>
</dbReference>
<dbReference type="GO" id="GO:0004152">
    <property type="term" value="F:dihydroorotate dehydrogenase activity"/>
    <property type="evidence" value="ECO:0000318"/>
    <property type="project" value="GO_Central"/>
</dbReference>
<dbReference type="GO" id="GO:0006207">
    <property type="term" value="P:'de novo' pyrimidine nucleobase biosynthetic process"/>
    <property type="evidence" value="ECO:0000318"/>
    <property type="project" value="GO_Central"/>
</dbReference>
<dbReference type="GO" id="GO:0044205">
    <property type="term" value="P:'de novo' UMP biosynthetic process"/>
    <property type="evidence" value="ECO:0007669"/>
    <property type="project" value="UniProtKB-UniPathway"/>
</dbReference>
<dbReference type="GO" id="GO:0009220">
    <property type="term" value="P:pyrimidine ribonucleotide biosynthetic process"/>
    <property type="evidence" value="ECO:0000318"/>
    <property type="project" value="GO_Central"/>
</dbReference>
<dbReference type="CDD" id="cd04738">
    <property type="entry name" value="DHOD_2_like"/>
    <property type="match status" value="1"/>
</dbReference>
<dbReference type="FunFam" id="3.20.20.70:FF:000066">
    <property type="entry name" value="Dihydroorotate dehydrogenase (quinone), mitochondrial"/>
    <property type="match status" value="1"/>
</dbReference>
<dbReference type="Gene3D" id="3.20.20.70">
    <property type="entry name" value="Aldolase class I"/>
    <property type="match status" value="1"/>
</dbReference>
<dbReference type="InterPro" id="IPR013785">
    <property type="entry name" value="Aldolase_TIM"/>
</dbReference>
<dbReference type="InterPro" id="IPR050074">
    <property type="entry name" value="DHO_dehydrogenase"/>
</dbReference>
<dbReference type="InterPro" id="IPR005719">
    <property type="entry name" value="Dihydroorotate_DH_2"/>
</dbReference>
<dbReference type="InterPro" id="IPR005720">
    <property type="entry name" value="Dihydroorotate_DH_cat"/>
</dbReference>
<dbReference type="InterPro" id="IPR001295">
    <property type="entry name" value="Dihydroorotate_DH_CS"/>
</dbReference>
<dbReference type="NCBIfam" id="NF003645">
    <property type="entry name" value="PRK05286.1-2"/>
    <property type="match status" value="1"/>
</dbReference>
<dbReference type="NCBIfam" id="NF003652">
    <property type="entry name" value="PRK05286.2-5"/>
    <property type="match status" value="1"/>
</dbReference>
<dbReference type="NCBIfam" id="TIGR01036">
    <property type="entry name" value="pyrD_sub2"/>
    <property type="match status" value="1"/>
</dbReference>
<dbReference type="PANTHER" id="PTHR48109:SF4">
    <property type="entry name" value="DIHYDROOROTATE DEHYDROGENASE (QUINONE), MITOCHONDRIAL"/>
    <property type="match status" value="1"/>
</dbReference>
<dbReference type="PANTHER" id="PTHR48109">
    <property type="entry name" value="DIHYDROOROTATE DEHYDROGENASE (QUINONE), MITOCHONDRIAL-RELATED"/>
    <property type="match status" value="1"/>
</dbReference>
<dbReference type="Pfam" id="PF01180">
    <property type="entry name" value="DHO_dh"/>
    <property type="match status" value="1"/>
</dbReference>
<dbReference type="SUPFAM" id="SSF51395">
    <property type="entry name" value="FMN-linked oxidoreductases"/>
    <property type="match status" value="1"/>
</dbReference>
<dbReference type="PROSITE" id="PS00911">
    <property type="entry name" value="DHODEHASE_1"/>
    <property type="match status" value="1"/>
</dbReference>
<dbReference type="PROSITE" id="PS00912">
    <property type="entry name" value="DHODEHASE_2"/>
    <property type="match status" value="1"/>
</dbReference>
<organism>
    <name type="scientific">Eremothecium gossypii (strain ATCC 10895 / CBS 109.51 / FGSC 9923 / NRRL Y-1056)</name>
    <name type="common">Yeast</name>
    <name type="synonym">Ashbya gossypii</name>
    <dbReference type="NCBI Taxonomy" id="284811"/>
    <lineage>
        <taxon>Eukaryota</taxon>
        <taxon>Fungi</taxon>
        <taxon>Dikarya</taxon>
        <taxon>Ascomycota</taxon>
        <taxon>Saccharomycotina</taxon>
        <taxon>Saccharomycetes</taxon>
        <taxon>Saccharomycetales</taxon>
        <taxon>Saccharomycetaceae</taxon>
        <taxon>Eremothecium</taxon>
    </lineage>
</organism>